<reference key="1">
    <citation type="journal article" date="1998" name="J. Cell Sci.">
        <title>ELAV protein HuA (HuR) can redistribute between nucleus and cytoplasm and is upregulated during serum stimulation and T cell activation.</title>
        <authorList>
            <person name="Atasoy U."/>
            <person name="Watson J."/>
            <person name="Patel D."/>
            <person name="Keene J.D."/>
        </authorList>
    </citation>
    <scope>NUCLEOTIDE SEQUENCE [MRNA]</scope>
    <scope>SUBCELLULAR LOCATION</scope>
    <source>
        <tissue>Brain</tissue>
        <tissue>Spleen</tissue>
    </source>
</reference>
<reference key="2">
    <citation type="journal article" date="2005" name="Science">
        <title>The transcriptional landscape of the mammalian genome.</title>
        <authorList>
            <person name="Carninci P."/>
            <person name="Kasukawa T."/>
            <person name="Katayama S."/>
            <person name="Gough J."/>
            <person name="Frith M.C."/>
            <person name="Maeda N."/>
            <person name="Oyama R."/>
            <person name="Ravasi T."/>
            <person name="Lenhard B."/>
            <person name="Wells C."/>
            <person name="Kodzius R."/>
            <person name="Shimokawa K."/>
            <person name="Bajic V.B."/>
            <person name="Brenner S.E."/>
            <person name="Batalov S."/>
            <person name="Forrest A.R."/>
            <person name="Zavolan M."/>
            <person name="Davis M.J."/>
            <person name="Wilming L.G."/>
            <person name="Aidinis V."/>
            <person name="Allen J.E."/>
            <person name="Ambesi-Impiombato A."/>
            <person name="Apweiler R."/>
            <person name="Aturaliya R.N."/>
            <person name="Bailey T.L."/>
            <person name="Bansal M."/>
            <person name="Baxter L."/>
            <person name="Beisel K.W."/>
            <person name="Bersano T."/>
            <person name="Bono H."/>
            <person name="Chalk A.M."/>
            <person name="Chiu K.P."/>
            <person name="Choudhary V."/>
            <person name="Christoffels A."/>
            <person name="Clutterbuck D.R."/>
            <person name="Crowe M.L."/>
            <person name="Dalla E."/>
            <person name="Dalrymple B.P."/>
            <person name="de Bono B."/>
            <person name="Della Gatta G."/>
            <person name="di Bernardo D."/>
            <person name="Down T."/>
            <person name="Engstrom P."/>
            <person name="Fagiolini M."/>
            <person name="Faulkner G."/>
            <person name="Fletcher C.F."/>
            <person name="Fukushima T."/>
            <person name="Furuno M."/>
            <person name="Futaki S."/>
            <person name="Gariboldi M."/>
            <person name="Georgii-Hemming P."/>
            <person name="Gingeras T.R."/>
            <person name="Gojobori T."/>
            <person name="Green R.E."/>
            <person name="Gustincich S."/>
            <person name="Harbers M."/>
            <person name="Hayashi Y."/>
            <person name="Hensch T.K."/>
            <person name="Hirokawa N."/>
            <person name="Hill D."/>
            <person name="Huminiecki L."/>
            <person name="Iacono M."/>
            <person name="Ikeo K."/>
            <person name="Iwama A."/>
            <person name="Ishikawa T."/>
            <person name="Jakt M."/>
            <person name="Kanapin A."/>
            <person name="Katoh M."/>
            <person name="Kawasawa Y."/>
            <person name="Kelso J."/>
            <person name="Kitamura H."/>
            <person name="Kitano H."/>
            <person name="Kollias G."/>
            <person name="Krishnan S.P."/>
            <person name="Kruger A."/>
            <person name="Kummerfeld S.K."/>
            <person name="Kurochkin I.V."/>
            <person name="Lareau L.F."/>
            <person name="Lazarevic D."/>
            <person name="Lipovich L."/>
            <person name="Liu J."/>
            <person name="Liuni S."/>
            <person name="McWilliam S."/>
            <person name="Madan Babu M."/>
            <person name="Madera M."/>
            <person name="Marchionni L."/>
            <person name="Matsuda H."/>
            <person name="Matsuzawa S."/>
            <person name="Miki H."/>
            <person name="Mignone F."/>
            <person name="Miyake S."/>
            <person name="Morris K."/>
            <person name="Mottagui-Tabar S."/>
            <person name="Mulder N."/>
            <person name="Nakano N."/>
            <person name="Nakauchi H."/>
            <person name="Ng P."/>
            <person name="Nilsson R."/>
            <person name="Nishiguchi S."/>
            <person name="Nishikawa S."/>
            <person name="Nori F."/>
            <person name="Ohara O."/>
            <person name="Okazaki Y."/>
            <person name="Orlando V."/>
            <person name="Pang K.C."/>
            <person name="Pavan W.J."/>
            <person name="Pavesi G."/>
            <person name="Pesole G."/>
            <person name="Petrovsky N."/>
            <person name="Piazza S."/>
            <person name="Reed J."/>
            <person name="Reid J.F."/>
            <person name="Ring B.Z."/>
            <person name="Ringwald M."/>
            <person name="Rost B."/>
            <person name="Ruan Y."/>
            <person name="Salzberg S.L."/>
            <person name="Sandelin A."/>
            <person name="Schneider C."/>
            <person name="Schoenbach C."/>
            <person name="Sekiguchi K."/>
            <person name="Semple C.A."/>
            <person name="Seno S."/>
            <person name="Sessa L."/>
            <person name="Sheng Y."/>
            <person name="Shibata Y."/>
            <person name="Shimada H."/>
            <person name="Shimada K."/>
            <person name="Silva D."/>
            <person name="Sinclair B."/>
            <person name="Sperling S."/>
            <person name="Stupka E."/>
            <person name="Sugiura K."/>
            <person name="Sultana R."/>
            <person name="Takenaka Y."/>
            <person name="Taki K."/>
            <person name="Tammoja K."/>
            <person name="Tan S.L."/>
            <person name="Tang S."/>
            <person name="Taylor M.S."/>
            <person name="Tegner J."/>
            <person name="Teichmann S.A."/>
            <person name="Ueda H.R."/>
            <person name="van Nimwegen E."/>
            <person name="Verardo R."/>
            <person name="Wei C.L."/>
            <person name="Yagi K."/>
            <person name="Yamanishi H."/>
            <person name="Zabarovsky E."/>
            <person name="Zhu S."/>
            <person name="Zimmer A."/>
            <person name="Hide W."/>
            <person name="Bult C."/>
            <person name="Grimmond S.M."/>
            <person name="Teasdale R.D."/>
            <person name="Liu E.T."/>
            <person name="Brusic V."/>
            <person name="Quackenbush J."/>
            <person name="Wahlestedt C."/>
            <person name="Mattick J.S."/>
            <person name="Hume D.A."/>
            <person name="Kai C."/>
            <person name="Sasaki D."/>
            <person name="Tomaru Y."/>
            <person name="Fukuda S."/>
            <person name="Kanamori-Katayama M."/>
            <person name="Suzuki M."/>
            <person name="Aoki J."/>
            <person name="Arakawa T."/>
            <person name="Iida J."/>
            <person name="Imamura K."/>
            <person name="Itoh M."/>
            <person name="Kato T."/>
            <person name="Kawaji H."/>
            <person name="Kawagashira N."/>
            <person name="Kawashima T."/>
            <person name="Kojima M."/>
            <person name="Kondo S."/>
            <person name="Konno H."/>
            <person name="Nakano K."/>
            <person name="Ninomiya N."/>
            <person name="Nishio T."/>
            <person name="Okada M."/>
            <person name="Plessy C."/>
            <person name="Shibata K."/>
            <person name="Shiraki T."/>
            <person name="Suzuki S."/>
            <person name="Tagami M."/>
            <person name="Waki K."/>
            <person name="Watahiki A."/>
            <person name="Okamura-Oho Y."/>
            <person name="Suzuki H."/>
            <person name="Kawai J."/>
            <person name="Hayashizaki Y."/>
        </authorList>
    </citation>
    <scope>NUCLEOTIDE SEQUENCE [LARGE SCALE MRNA]</scope>
    <source>
        <strain>C57BL/6J</strain>
        <tissue>Thymus</tissue>
    </source>
</reference>
<reference key="3">
    <citation type="submission" date="2005-07" db="EMBL/GenBank/DDBJ databases">
        <authorList>
            <person name="Mural R.J."/>
            <person name="Adams M.D."/>
            <person name="Myers E.W."/>
            <person name="Smith H.O."/>
            <person name="Venter J.C."/>
        </authorList>
    </citation>
    <scope>NUCLEOTIDE SEQUENCE [LARGE SCALE GENOMIC DNA]</scope>
</reference>
<reference key="4">
    <citation type="journal article" date="1995" name="Proc. Natl. Acad. Sci. U.S.A.">
        <title>A conserved family of elav-like genes in vertebrates.</title>
        <authorList>
            <person name="Good P.J."/>
        </authorList>
    </citation>
    <scope>NUCLEOTIDE SEQUENCE [MRNA] OF 119-292</scope>
    <source>
        <tissue>Brain</tissue>
    </source>
</reference>
<reference key="5">
    <citation type="journal article" date="2002" name="J. Biol. Chem.">
        <title>Lipopolysaccharide-induced methylation of HuR, an mRNA-stabilizing protein, by CARM1. Coactivator-associated arginine methyltransferase.</title>
        <authorList>
            <person name="Li H."/>
            <person name="Park S."/>
            <person name="Kilburn B."/>
            <person name="Jelinek M.A."/>
            <person name="Henschen-Edman A."/>
            <person name="Aswad D.W."/>
            <person name="Stallcup M.R."/>
            <person name="Laird-Offringa I.A."/>
        </authorList>
    </citation>
    <scope>METHYLATION AT ARG-217</scope>
</reference>
<reference key="6">
    <citation type="journal article" date="2010" name="Cell">
        <title>A tissue-specific atlas of mouse protein phosphorylation and expression.</title>
        <authorList>
            <person name="Huttlin E.L."/>
            <person name="Jedrychowski M.P."/>
            <person name="Elias J.E."/>
            <person name="Goswami T."/>
            <person name="Rad R."/>
            <person name="Beausoleil S.A."/>
            <person name="Villen J."/>
            <person name="Haas W."/>
            <person name="Sowa M.E."/>
            <person name="Gygi S.P."/>
        </authorList>
    </citation>
    <scope>PHOSPHORYLATION [LARGE SCALE ANALYSIS] AT SER-202</scope>
    <scope>IDENTIFICATION BY MASS SPECTROMETRY [LARGE SCALE ANALYSIS]</scope>
    <source>
        <tissue>Brain</tissue>
        <tissue>Brown adipose tissue</tissue>
        <tissue>Heart</tissue>
        <tissue>Kidney</tissue>
        <tissue>Liver</tissue>
        <tissue>Lung</tissue>
        <tissue>Pancreas</tissue>
        <tissue>Spleen</tissue>
        <tissue>Testis</tissue>
    </source>
</reference>
<reference key="7">
    <citation type="journal article" date="2011" name="Mol. Cell. Biol.">
        <title>Cooperative role of the RNA-binding proteins Hzf and HuR in p53 activation.</title>
        <authorList>
            <person name="Nakamura H."/>
            <person name="Kawagishi H."/>
            <person name="Watanabe A."/>
            <person name="Sugimoto K."/>
            <person name="Maruyama M."/>
            <person name="Sugimoto M."/>
        </authorList>
    </citation>
    <scope>FUNCTION IN MRNA LOCALIZATION</scope>
    <scope>INTERACTION WITH ZNF385A</scope>
    <scope>RNA-BINDING</scope>
</reference>
<reference key="8">
    <citation type="journal article" date="2014" name="Mol. Cell. Proteomics">
        <title>Immunoaffinity enrichment and mass spectrometry analysis of protein methylation.</title>
        <authorList>
            <person name="Guo A."/>
            <person name="Gu H."/>
            <person name="Zhou J."/>
            <person name="Mulhern D."/>
            <person name="Wang Y."/>
            <person name="Lee K.A."/>
            <person name="Yang V."/>
            <person name="Aguiar M."/>
            <person name="Kornhauser J."/>
            <person name="Jia X."/>
            <person name="Ren J."/>
            <person name="Beausoleil S.A."/>
            <person name="Silva J.C."/>
            <person name="Vemulapalli V."/>
            <person name="Bedford M.T."/>
            <person name="Comb M.J."/>
        </authorList>
    </citation>
    <scope>METHYLATION [LARGE SCALE ANALYSIS] AT ARG-206 AND ARG-217</scope>
    <scope>IDENTIFICATION BY MASS SPECTROMETRY [LARGE SCALE ANALYSIS]</scope>
    <source>
        <tissue>Brain</tissue>
        <tissue>Embryo</tissue>
    </source>
</reference>
<reference key="9">
    <citation type="journal article" date="2014" name="Nat. Cell Biol.">
        <title>N-methyladenosine modification destabilizes developmental regulators in embryonic stem cells.</title>
        <authorList>
            <person name="Wang Y."/>
            <person name="Li Y."/>
            <person name="Toth J.I."/>
            <person name="Petroski M.D."/>
            <person name="Zhang Z."/>
            <person name="Zhao J.C."/>
        </authorList>
    </citation>
    <scope>FUNCTION</scope>
    <scope>RNA-BINDING</scope>
</reference>
<reference key="10">
    <citation type="journal article" date="2016" name="Biochim. Biophys. Acta">
        <title>Antagonizing effect of CLPABP on the function of HuR as a regulator of ARE-containing leptin mRNA stability and the effect of its depletion on obesity in old male mouse.</title>
        <authorList>
            <person name="Nishino T."/>
            <person name="Matsunaga R."/>
            <person name="Jikihara H."/>
            <person name="Uchida M."/>
            <person name="Maeda A."/>
            <person name="Qi G."/>
            <person name="Abe T."/>
            <person name="Kiyonari H."/>
            <person name="Tashiro S."/>
            <person name="Inagaki-Ohara K."/>
            <person name="Shimamoto F."/>
            <person name="Konishi H."/>
        </authorList>
    </citation>
    <scope>FUNCTION</scope>
    <scope>SUBCELLULAR LOCATION</scope>
</reference>
<evidence type="ECO:0000250" key="1">
    <source>
        <dbReference type="UniProtKB" id="Q15717"/>
    </source>
</evidence>
<evidence type="ECO:0000255" key="2">
    <source>
        <dbReference type="PROSITE-ProRule" id="PRU00176"/>
    </source>
</evidence>
<evidence type="ECO:0000269" key="3">
    <source>
    </source>
</evidence>
<evidence type="ECO:0000269" key="4">
    <source>
    </source>
</evidence>
<evidence type="ECO:0000269" key="5">
    <source>
    </source>
</evidence>
<evidence type="ECO:0000269" key="6">
    <source>
    </source>
</evidence>
<evidence type="ECO:0000269" key="7">
    <source>
    </source>
</evidence>
<evidence type="ECO:0000305" key="8"/>
<evidence type="ECO:0007744" key="9">
    <source>
    </source>
</evidence>
<evidence type="ECO:0007744" key="10">
    <source>
    </source>
</evidence>
<dbReference type="EMBL" id="U65735">
    <property type="protein sequence ID" value="AAB17967.1"/>
    <property type="molecule type" value="mRNA"/>
</dbReference>
<dbReference type="EMBL" id="AK080365">
    <property type="protein sequence ID" value="BAC37892.1"/>
    <property type="molecule type" value="mRNA"/>
</dbReference>
<dbReference type="EMBL" id="CH466566">
    <property type="protein sequence ID" value="EDL21996.1"/>
    <property type="molecule type" value="Genomic_DNA"/>
</dbReference>
<dbReference type="EMBL" id="CH466566">
    <property type="protein sequence ID" value="EDL21997.1"/>
    <property type="molecule type" value="Genomic_DNA"/>
</dbReference>
<dbReference type="EMBL" id="U17595">
    <property type="protein sequence ID" value="AAA96941.1"/>
    <property type="molecule type" value="mRNA"/>
</dbReference>
<dbReference type="CCDS" id="CCDS22084.1"/>
<dbReference type="PIR" id="I49144">
    <property type="entry name" value="I49144"/>
</dbReference>
<dbReference type="RefSeq" id="NP_034615.2">
    <property type="nucleotide sequence ID" value="NM_010485.3"/>
</dbReference>
<dbReference type="RefSeq" id="XP_006508761.1">
    <property type="nucleotide sequence ID" value="XM_006508698.5"/>
</dbReference>
<dbReference type="RefSeq" id="XP_030099161.1">
    <property type="nucleotide sequence ID" value="XM_030243301.2"/>
</dbReference>
<dbReference type="RefSeq" id="XP_030099162.1">
    <property type="nucleotide sequence ID" value="XM_030243302.2"/>
</dbReference>
<dbReference type="SMR" id="P70372"/>
<dbReference type="BioGRID" id="200482">
    <property type="interactions" value="46"/>
</dbReference>
<dbReference type="CORUM" id="P70372"/>
<dbReference type="DIP" id="DIP-46480N"/>
<dbReference type="FunCoup" id="P70372">
    <property type="interactions" value="4222"/>
</dbReference>
<dbReference type="IntAct" id="P70372">
    <property type="interactions" value="38"/>
</dbReference>
<dbReference type="MINT" id="P70372"/>
<dbReference type="STRING" id="10090.ENSMUSP00000096549"/>
<dbReference type="GlyGen" id="P70372">
    <property type="glycosylation" value="1 site, 1 O-linked glycan (1 site)"/>
</dbReference>
<dbReference type="iPTMnet" id="P70372"/>
<dbReference type="PhosphoSitePlus" id="P70372"/>
<dbReference type="SwissPalm" id="P70372"/>
<dbReference type="jPOST" id="P70372"/>
<dbReference type="PaxDb" id="10090-ENSMUSP00000096549"/>
<dbReference type="PeptideAtlas" id="P70372"/>
<dbReference type="ProteomicsDB" id="275522"/>
<dbReference type="Pumba" id="P70372"/>
<dbReference type="TopDownProteomics" id="P70372"/>
<dbReference type="Antibodypedia" id="3933">
    <property type="antibodies" value="493 antibodies from 37 providers"/>
</dbReference>
<dbReference type="DNASU" id="15568"/>
<dbReference type="Ensembl" id="ENSMUST00000098950.6">
    <property type="protein sequence ID" value="ENSMUSP00000096549.5"/>
    <property type="gene ID" value="ENSMUSG00000040028.11"/>
</dbReference>
<dbReference type="Ensembl" id="ENSMUST00000209010.2">
    <property type="protein sequence ID" value="ENSMUSP00000146866.2"/>
    <property type="gene ID" value="ENSMUSG00000040028.11"/>
</dbReference>
<dbReference type="GeneID" id="15568"/>
<dbReference type="KEGG" id="mmu:15568"/>
<dbReference type="UCSC" id="uc009kts.1">
    <property type="organism name" value="mouse"/>
</dbReference>
<dbReference type="AGR" id="MGI:1100851"/>
<dbReference type="CTD" id="1994"/>
<dbReference type="MGI" id="MGI:1100851">
    <property type="gene designation" value="Elavl1"/>
</dbReference>
<dbReference type="VEuPathDB" id="HostDB:ENSMUSG00000040028"/>
<dbReference type="eggNOG" id="KOG0145">
    <property type="taxonomic scope" value="Eukaryota"/>
</dbReference>
<dbReference type="GeneTree" id="ENSGT00940000155528"/>
<dbReference type="HOGENOM" id="CLU_026186_2_2_1"/>
<dbReference type="InParanoid" id="P70372"/>
<dbReference type="OMA" id="NQMRYNN"/>
<dbReference type="OrthoDB" id="266020at2759"/>
<dbReference type="PhylomeDB" id="P70372"/>
<dbReference type="TreeFam" id="TF313377"/>
<dbReference type="Reactome" id="R-MMU-450520">
    <property type="pathway name" value="HuR (ELAVL1) binds and stabilizes mRNA"/>
</dbReference>
<dbReference type="BioGRID-ORCS" id="15568">
    <property type="hits" value="21 hits in 83 CRISPR screens"/>
</dbReference>
<dbReference type="ChiTaRS" id="Elavl1">
    <property type="organism name" value="mouse"/>
</dbReference>
<dbReference type="PRO" id="PR:P70372"/>
<dbReference type="Proteomes" id="UP000000589">
    <property type="component" value="Chromosome 8"/>
</dbReference>
<dbReference type="RNAct" id="P70372">
    <property type="molecule type" value="protein"/>
</dbReference>
<dbReference type="Bgee" id="ENSMUSG00000040028">
    <property type="expression patterns" value="Expressed in endocardial cushion and 286 other cell types or tissues"/>
</dbReference>
<dbReference type="GO" id="GO:0005737">
    <property type="term" value="C:cytoplasm"/>
    <property type="evidence" value="ECO:0000314"/>
    <property type="project" value="UniProtKB"/>
</dbReference>
<dbReference type="GO" id="GO:0010494">
    <property type="term" value="C:cytoplasmic stress granule"/>
    <property type="evidence" value="ECO:0000314"/>
    <property type="project" value="UniProtKB"/>
</dbReference>
<dbReference type="GO" id="GO:0031410">
    <property type="term" value="C:cytoplasmic vesicle"/>
    <property type="evidence" value="ECO:0000353"/>
    <property type="project" value="MGI"/>
</dbReference>
<dbReference type="GO" id="GO:0005829">
    <property type="term" value="C:cytosol"/>
    <property type="evidence" value="ECO:0000250"/>
    <property type="project" value="UniProtKB"/>
</dbReference>
<dbReference type="GO" id="GO:0005783">
    <property type="term" value="C:endoplasmic reticulum"/>
    <property type="evidence" value="ECO:0000314"/>
    <property type="project" value="CACAO"/>
</dbReference>
<dbReference type="GO" id="GO:0098978">
    <property type="term" value="C:glutamatergic synapse"/>
    <property type="evidence" value="ECO:0000314"/>
    <property type="project" value="SynGO"/>
</dbReference>
<dbReference type="GO" id="GO:0005654">
    <property type="term" value="C:nucleoplasm"/>
    <property type="evidence" value="ECO:0000250"/>
    <property type="project" value="UniProtKB"/>
</dbReference>
<dbReference type="GO" id="GO:0005634">
    <property type="term" value="C:nucleus"/>
    <property type="evidence" value="ECO:0000314"/>
    <property type="project" value="UniProtKB"/>
</dbReference>
<dbReference type="GO" id="GO:0000932">
    <property type="term" value="C:P-body"/>
    <property type="evidence" value="ECO:0007669"/>
    <property type="project" value="UniProtKB-SubCell"/>
</dbReference>
<dbReference type="GO" id="GO:0098794">
    <property type="term" value="C:postsynapse"/>
    <property type="evidence" value="ECO:0000314"/>
    <property type="project" value="SynGO"/>
</dbReference>
<dbReference type="GO" id="GO:1990904">
    <property type="term" value="C:ribonucleoprotein complex"/>
    <property type="evidence" value="ECO:0000314"/>
    <property type="project" value="UniProtKB"/>
</dbReference>
<dbReference type="GO" id="GO:0016528">
    <property type="term" value="C:sarcoplasm"/>
    <property type="evidence" value="ECO:0000314"/>
    <property type="project" value="MGI"/>
</dbReference>
<dbReference type="GO" id="GO:0003725">
    <property type="term" value="F:double-stranded RNA binding"/>
    <property type="evidence" value="ECO:0000266"/>
    <property type="project" value="MGI"/>
</dbReference>
<dbReference type="GO" id="GO:0106222">
    <property type="term" value="F:lncRNA binding"/>
    <property type="evidence" value="ECO:0000314"/>
    <property type="project" value="MGI"/>
</dbReference>
<dbReference type="GO" id="GO:0035198">
    <property type="term" value="F:miRNA binding"/>
    <property type="evidence" value="ECO:0000250"/>
    <property type="project" value="UniProtKB"/>
</dbReference>
<dbReference type="GO" id="GO:0035925">
    <property type="term" value="F:mRNA 3'-UTR AU-rich region binding"/>
    <property type="evidence" value="ECO:0000314"/>
    <property type="project" value="UniProtKB"/>
</dbReference>
<dbReference type="GO" id="GO:0003730">
    <property type="term" value="F:mRNA 3'-UTR binding"/>
    <property type="evidence" value="ECO:0000314"/>
    <property type="project" value="UniProtKB"/>
</dbReference>
<dbReference type="GO" id="GO:0003729">
    <property type="term" value="F:mRNA binding"/>
    <property type="evidence" value="ECO:0000314"/>
    <property type="project" value="UniProtKB"/>
</dbReference>
<dbReference type="GO" id="GO:0042803">
    <property type="term" value="F:protein homodimerization activity"/>
    <property type="evidence" value="ECO:0007669"/>
    <property type="project" value="Ensembl"/>
</dbReference>
<dbReference type="GO" id="GO:0019901">
    <property type="term" value="F:protein kinase binding"/>
    <property type="evidence" value="ECO:0007669"/>
    <property type="project" value="Ensembl"/>
</dbReference>
<dbReference type="GO" id="GO:0003723">
    <property type="term" value="F:RNA binding"/>
    <property type="evidence" value="ECO:0000250"/>
    <property type="project" value="UniProtKB"/>
</dbReference>
<dbReference type="GO" id="GO:0070935">
    <property type="term" value="P:3'-UTR-mediated mRNA stabilization"/>
    <property type="evidence" value="ECO:0000314"/>
    <property type="project" value="UniProtKB"/>
</dbReference>
<dbReference type="GO" id="GO:0008283">
    <property type="term" value="P:cell population proliferation"/>
    <property type="evidence" value="ECO:0007669"/>
    <property type="project" value="Ensembl"/>
</dbReference>
<dbReference type="GO" id="GO:0000512">
    <property type="term" value="P:lncRNA-mediated post-transcriptional gene silencing"/>
    <property type="evidence" value="ECO:0000315"/>
    <property type="project" value="FlyBase"/>
</dbReference>
<dbReference type="GO" id="GO:0061157">
    <property type="term" value="P:mRNA destabilization"/>
    <property type="evidence" value="ECO:0007669"/>
    <property type="project" value="Ensembl"/>
</dbReference>
<dbReference type="GO" id="GO:0048255">
    <property type="term" value="P:mRNA stabilization"/>
    <property type="evidence" value="ECO:0000314"/>
    <property type="project" value="CACAO"/>
</dbReference>
<dbReference type="GO" id="GO:0060965">
    <property type="term" value="P:negative regulation of miRNA-mediated gene silencing"/>
    <property type="evidence" value="ECO:0000250"/>
    <property type="project" value="UniProtKB"/>
</dbReference>
<dbReference type="GO" id="GO:0045772">
    <property type="term" value="P:positive regulation of autophagosome size"/>
    <property type="evidence" value="ECO:0007669"/>
    <property type="project" value="Ensembl"/>
</dbReference>
<dbReference type="GO" id="GO:0010508">
    <property type="term" value="P:positive regulation of autophagy"/>
    <property type="evidence" value="ECO:0007669"/>
    <property type="project" value="Ensembl"/>
</dbReference>
<dbReference type="GO" id="GO:0032930">
    <property type="term" value="P:positive regulation of superoxide anion generation"/>
    <property type="evidence" value="ECO:0007669"/>
    <property type="project" value="Ensembl"/>
</dbReference>
<dbReference type="GO" id="GO:0045727">
    <property type="term" value="P:positive regulation of translation"/>
    <property type="evidence" value="ECO:0000314"/>
    <property type="project" value="MGI"/>
</dbReference>
<dbReference type="GO" id="GO:0016441">
    <property type="term" value="P:post-transcriptional gene silencing"/>
    <property type="evidence" value="ECO:0000314"/>
    <property type="project" value="ARUK-UCL"/>
</dbReference>
<dbReference type="GO" id="GO:0051260">
    <property type="term" value="P:protein homooligomerization"/>
    <property type="evidence" value="ECO:0000250"/>
    <property type="project" value="UniProtKB"/>
</dbReference>
<dbReference type="GO" id="GO:0006606">
    <property type="term" value="P:protein import into nucleus"/>
    <property type="evidence" value="ECO:0000315"/>
    <property type="project" value="CACAO"/>
</dbReference>
<dbReference type="GO" id="GO:2000036">
    <property type="term" value="P:regulation of stem cell population maintenance"/>
    <property type="evidence" value="ECO:0000315"/>
    <property type="project" value="UniProtKB"/>
</dbReference>
<dbReference type="GO" id="GO:0009749">
    <property type="term" value="P:response to glucose"/>
    <property type="evidence" value="ECO:0007669"/>
    <property type="project" value="Ensembl"/>
</dbReference>
<dbReference type="CDD" id="cd12769">
    <property type="entry name" value="RRM1_HuR"/>
    <property type="match status" value="1"/>
</dbReference>
<dbReference type="CDD" id="cd12773">
    <property type="entry name" value="RRM2_HuR"/>
    <property type="match status" value="1"/>
</dbReference>
<dbReference type="CDD" id="cd12653">
    <property type="entry name" value="RRM3_HuR"/>
    <property type="match status" value="1"/>
</dbReference>
<dbReference type="FunFam" id="3.30.70.330:FF:000006">
    <property type="entry name" value="ELAV-like 3"/>
    <property type="match status" value="1"/>
</dbReference>
<dbReference type="FunFam" id="3.30.70.330:FF:000005">
    <property type="entry name" value="ELAV-like protein"/>
    <property type="match status" value="1"/>
</dbReference>
<dbReference type="FunFam" id="3.30.70.330:FF:000215">
    <property type="entry name" value="ELAV-like protein"/>
    <property type="match status" value="1"/>
</dbReference>
<dbReference type="Gene3D" id="3.30.70.330">
    <property type="match status" value="3"/>
</dbReference>
<dbReference type="InterPro" id="IPR006548">
    <property type="entry name" value="ELAD_HU_SF"/>
</dbReference>
<dbReference type="InterPro" id="IPR002343">
    <property type="entry name" value="Hud_Sxl_RNA"/>
</dbReference>
<dbReference type="InterPro" id="IPR034996">
    <property type="entry name" value="HuR_RRM2"/>
</dbReference>
<dbReference type="InterPro" id="IPR012677">
    <property type="entry name" value="Nucleotide-bd_a/b_plait_sf"/>
</dbReference>
<dbReference type="InterPro" id="IPR035979">
    <property type="entry name" value="RBD_domain_sf"/>
</dbReference>
<dbReference type="InterPro" id="IPR000504">
    <property type="entry name" value="RRM_dom"/>
</dbReference>
<dbReference type="NCBIfam" id="TIGR01661">
    <property type="entry name" value="ELAV_HUD_SF"/>
    <property type="match status" value="1"/>
</dbReference>
<dbReference type="PANTHER" id="PTHR10352">
    <property type="entry name" value="EUKARYOTIC TRANSLATION INITIATION FACTOR 3 SUBUNIT G"/>
    <property type="match status" value="1"/>
</dbReference>
<dbReference type="Pfam" id="PF00076">
    <property type="entry name" value="RRM_1"/>
    <property type="match status" value="3"/>
</dbReference>
<dbReference type="PRINTS" id="PR00961">
    <property type="entry name" value="HUDSXLRNA"/>
</dbReference>
<dbReference type="SMART" id="SM00360">
    <property type="entry name" value="RRM"/>
    <property type="match status" value="3"/>
</dbReference>
<dbReference type="SUPFAM" id="SSF54928">
    <property type="entry name" value="RNA-binding domain, RBD"/>
    <property type="match status" value="2"/>
</dbReference>
<dbReference type="PROSITE" id="PS50102">
    <property type="entry name" value="RRM"/>
    <property type="match status" value="3"/>
</dbReference>
<gene>
    <name type="primary">Elavl1</name>
    <name type="synonym">Elra</name>
    <name type="synonym">Hua</name>
</gene>
<feature type="initiator methionine" description="Removed" evidence="1">
    <location>
        <position position="1"/>
    </location>
</feature>
<feature type="chain" id="PRO_0000081578" description="ELAV-like protein 1">
    <location>
        <begin position="2"/>
        <end position="326"/>
    </location>
</feature>
<feature type="domain" description="RRM 1" evidence="2">
    <location>
        <begin position="20"/>
        <end position="98"/>
    </location>
</feature>
<feature type="domain" description="RRM 2" evidence="2">
    <location>
        <begin position="106"/>
        <end position="186"/>
    </location>
</feature>
<feature type="domain" description="RRM 3" evidence="2">
    <location>
        <begin position="244"/>
        <end position="322"/>
    </location>
</feature>
<feature type="modified residue" description="N-acetylserine" evidence="1">
    <location>
        <position position="2"/>
    </location>
</feature>
<feature type="modified residue" description="Phosphoserine" evidence="1">
    <location>
        <position position="2"/>
    </location>
</feature>
<feature type="modified residue" description="Phosphoserine" evidence="1">
    <location>
        <position position="100"/>
    </location>
</feature>
<feature type="modified residue" description="Phosphoserine" evidence="1">
    <location>
        <position position="158"/>
    </location>
</feature>
<feature type="modified residue" description="Phosphoserine" evidence="1">
    <location>
        <position position="197"/>
    </location>
</feature>
<feature type="modified residue" description="Phosphoserine" evidence="9">
    <location>
        <position position="202"/>
    </location>
</feature>
<feature type="modified residue" description="Omega-N-methylarginine" evidence="10">
    <location>
        <position position="206"/>
    </location>
</feature>
<feature type="modified residue" description="Asymmetric dimethylarginine; by CARM1; alternate" evidence="3">
    <location>
        <position position="217"/>
    </location>
</feature>
<feature type="modified residue" description="Omega-N-methylarginine; alternate" evidence="10">
    <location>
        <position position="217"/>
    </location>
</feature>
<feature type="modified residue" description="Phosphoserine" evidence="1">
    <location>
        <position position="221"/>
    </location>
</feature>
<feature type="modified residue" description="Phosphoserine" evidence="1">
    <location>
        <position position="318"/>
    </location>
</feature>
<feature type="cross-link" description="Glycyl lysine isopeptide (Lys-Gly) (interchain with G-Cter in SUMO2)" evidence="1">
    <location>
        <position position="191"/>
    </location>
</feature>
<feature type="sequence conflict" description="In Ref. 1; AAB17967." evidence="8" ref="1">
    <original>N</original>
    <variation>G</variation>
    <location>
        <position position="3"/>
    </location>
</feature>
<feature type="sequence conflict" description="In Ref. 1; AAB17967." evidence="8" ref="1">
    <original>D</original>
    <variation>G</variation>
    <location>
        <position position="15"/>
    </location>
</feature>
<feature type="sequence conflict" description="In Ref. 1; AAB17967 and 4; AAA96941." evidence="8" ref="1 4">
    <original>N</original>
    <variation>I</variation>
    <location>
        <position position="168"/>
    </location>
</feature>
<feature type="sequence conflict" description="In Ref. 1; AAB17967." evidence="8" ref="1">
    <original>A</original>
    <variation>S</variation>
    <location>
        <position position="298"/>
    </location>
</feature>
<name>ELAV1_MOUSE</name>
<organism>
    <name type="scientific">Mus musculus</name>
    <name type="common">Mouse</name>
    <dbReference type="NCBI Taxonomy" id="10090"/>
    <lineage>
        <taxon>Eukaryota</taxon>
        <taxon>Metazoa</taxon>
        <taxon>Chordata</taxon>
        <taxon>Craniata</taxon>
        <taxon>Vertebrata</taxon>
        <taxon>Euteleostomi</taxon>
        <taxon>Mammalia</taxon>
        <taxon>Eutheria</taxon>
        <taxon>Euarchontoglires</taxon>
        <taxon>Glires</taxon>
        <taxon>Rodentia</taxon>
        <taxon>Myomorpha</taxon>
        <taxon>Muroidea</taxon>
        <taxon>Muridae</taxon>
        <taxon>Murinae</taxon>
        <taxon>Mus</taxon>
        <taxon>Mus</taxon>
    </lineage>
</organism>
<accession>P70372</accession>
<accession>Q60745</accession>
<accession>Q78QY3</accession>
<protein>
    <recommendedName>
        <fullName>ELAV-like protein 1</fullName>
    </recommendedName>
    <alternativeName>
        <fullName>Elav-like generic protein</fullName>
    </alternativeName>
    <alternativeName>
        <fullName>Hu-antigen R</fullName>
        <shortName>HuR</shortName>
    </alternativeName>
    <alternativeName>
        <fullName>MelG</fullName>
    </alternativeName>
</protein>
<proteinExistence type="evidence at protein level"/>
<sequence length="326" mass="36169">MSNGYEDHMAEDCRDDIGRTNLIVNYLPQNMTQEELRSLFSSIGEVESAKLIRDKVAGHSLGYGFVNYVTAKDAERAISTLNGLRLQSKTIKVSYARPSSEVIKDANLYISGLPRTMTQKDVEDMFSRFGRIINSRVLVDQTTGLSRGVAFIRFDKRSEAEEAITSFNGHKPPGSSEPITVKFAANPNQNKNMALLSQLYHSPARRFGGPVHHQAQRFRFSPMGVDHMSGISGVNVPGNASSGWCIFIYNLGQDADEGILWQMFGPFGAVTNVKVIRDFNTNKCKGFGFVTMTNYEEAAMAIASLNGYRLGDKILQVSFKTNKSHK</sequence>
<keyword id="KW-0007">Acetylation</keyword>
<keyword id="KW-0963">Cytoplasm</keyword>
<keyword id="KW-1017">Isopeptide bond</keyword>
<keyword id="KW-0488">Methylation</keyword>
<keyword id="KW-0539">Nucleus</keyword>
<keyword id="KW-0597">Phosphoprotein</keyword>
<keyword id="KW-1185">Reference proteome</keyword>
<keyword id="KW-0677">Repeat</keyword>
<keyword id="KW-0694">RNA-binding</keyword>
<keyword id="KW-0832">Ubl conjugation</keyword>
<comment type="function">
    <text evidence="1 4 5 6">RNA-binding protein that binds to the 3'-UTR region of mRNAs and increases their stability. Involved in embryonic stem cell (ESC) differentiation: preferentially binds mRNAs that are not methylated by N6-methyladenosine (m6A), stabilizing them, promoting ESC differentiation (PubMed:24394384). Has also been shown to be capable of binding to m6A-containing mRNAs and contributes to MYC stability by binding to m6A-containing MYC mRNAs (By similarity). Binds to poly-U elements and AU-rich elements (AREs) in the 3'-UTR of target mRNAs. Binds avidly to the AU-rich element in FOS and IL3/interleukin-3 mRNAs. In the case of the FOS AU-rich element, binds to a core element of 27 nucleotides that contain AUUUA, AUUUUA, and AUUUUUA motifs. Binds preferentially to the 5'-UUUU[AG]UUU-3' motif in vitro (By similarity). With ZNF385A, binds the 3'-UTR of p53/TP53 mRNA to control their nuclear export induced by CDKN2A. Hence, may regulate p53/TP53 expression and mediate in part the CDKN2A anti-proliferative activity. May also bind with ZNF385A the CCNB1 mRNA (PubMed:21402775). Increases the stability of the leptin mRNA harboring an AU-rich element (ARE) in its 3' UTR (PubMed:27616329).</text>
</comment>
<comment type="subunit">
    <text evidence="1 4">Monomer and homodimer (in vitro). Interacts with ANP32A (By similarity). Interacts with ZNF385A; the interaction is indirect and mRNA-dependent and may regulate p53/TP53 expression (PubMed:21402775). Identified in a mRNP complex, at least composed of DHX9, DDX3X, ELAVL1, HNRNPU, IGF2BP1, ILF3, PABPC1, PCBP2, PTBP2, STAU1, STAU2, SYNCRIP and YBX1. Interacts with AGO1 and AGO2. Interacts with IGF2BP1. Interacts with IGF2BP2 and IGF2BP3. Interacts with HNRNPL (By similarity). Interacts with DHX36; this interaction occurs in a RNA-dependent manner. Interacts with ILF3; this interaction occurs in a RNA-dependent manner (By similarity). Interacts with PLEKHN1 (By similarity). Interacts with SHFL; the interaction increases in presence of RNA (By similarity). Interacts with YBX1; interaction recruits ELAVL1 on C5-methylcytosine (m5C)-containing mRNAs, thereby promoting mRNA stability (By similarity). Interacts with FXR1 (By similarity).</text>
</comment>
<comment type="interaction">
    <interactant intactId="EBI-6877056">
        <id>P70372</id>
    </interactant>
    <interactant intactId="EBI-7100053">
        <id>Q03160</id>
        <label>Grb7</label>
    </interactant>
    <organismsDiffer>false</organismsDiffer>
    <experiments>7</experiments>
</comment>
<comment type="interaction">
    <interactant intactId="EBI-6877056">
        <id>P70372</id>
    </interactant>
    <interactant intactId="EBI-7809240">
        <id>Q80ZW7</id>
        <label>Tia1</label>
    </interactant>
    <organismsDiffer>false</organismsDiffer>
    <experiments>2</experiments>
</comment>
<comment type="interaction">
    <interactant intactId="EBI-6877056">
        <id>P70372</id>
    </interactant>
    <interactant intactId="EBI-529779">
        <id>P62960</id>
        <label>Ybx1</label>
    </interactant>
    <organismsDiffer>false</organismsDiffer>
    <experiments>5</experiments>
</comment>
<comment type="subcellular location">
    <subcellularLocation>
        <location evidence="7">Cytoplasm</location>
    </subcellularLocation>
    <subcellularLocation>
        <location evidence="7">Nucleus</location>
    </subcellularLocation>
    <subcellularLocation>
        <location evidence="6">Cytoplasm</location>
        <location evidence="6">Stress granule</location>
    </subcellularLocation>
    <subcellularLocation>
        <location evidence="1">Cytoplasm</location>
        <location evidence="1">P-body</location>
    </subcellularLocation>
    <text evidence="1 6">Translocates into the cytoplasm following phosphorylation by MAPKAPK2. Likewise, phosphorylation by PRKCD promotes translocation from the nucleus into the cytoplasm, where it is associated with free and cytoskeleton-bound polysomes (By similarity). Localizes to the stress granules in the presence of PLEKHN1.</text>
</comment>
<comment type="domain">
    <text evidence="1">The first RRM (RNA recognition motif) domain is essential for binding to AU-rich elements.</text>
</comment>
<comment type="PTM">
    <text evidence="1">Phosphorylated by MAPKAPK2. Phosphorylated by PRKCD.</text>
</comment>
<comment type="PTM">
    <text evidence="3">Methylated at Arg-217 by CARM1 in T-cells in response to LPS challenge.</text>
</comment>
<comment type="similarity">
    <text evidence="8">Belongs to the RRM elav family.</text>
</comment>